<accession>S0EQ07</accession>
<feature type="chain" id="PRO_0000456839" description="Bifunctional lycopene cyclase/phytoene synthase">
    <location>
        <begin position="1"/>
        <end position="580"/>
    </location>
</feature>
<feature type="transmembrane region" description="Helical" evidence="1">
    <location>
        <begin position="3"/>
        <end position="23"/>
    </location>
</feature>
<feature type="transmembrane region" description="Helical" evidence="1">
    <location>
        <begin position="35"/>
        <end position="55"/>
    </location>
</feature>
<feature type="transmembrane region" description="Helical" evidence="1">
    <location>
        <begin position="65"/>
        <end position="85"/>
    </location>
</feature>
<feature type="transmembrane region" description="Helical" evidence="1">
    <location>
        <begin position="116"/>
        <end position="136"/>
    </location>
</feature>
<feature type="transmembrane region" description="Helical" evidence="1">
    <location>
        <begin position="139"/>
        <end position="159"/>
    </location>
</feature>
<feature type="transmembrane region" description="Helical" evidence="1">
    <location>
        <begin position="171"/>
        <end position="191"/>
    </location>
</feature>
<feature type="transmembrane region" description="Helical" evidence="1">
    <location>
        <begin position="214"/>
        <end position="234"/>
    </location>
</feature>
<feature type="glycosylation site" description="N-linked (GlcNAc...) asparagine" evidence="2">
    <location>
        <position position="89"/>
    </location>
</feature>
<evidence type="ECO:0000255" key="1"/>
<evidence type="ECO:0000255" key="2">
    <source>
        <dbReference type="PROSITE-ProRule" id="PRU00498"/>
    </source>
</evidence>
<evidence type="ECO:0000269" key="3">
    <source>
    </source>
</evidence>
<evidence type="ECO:0000269" key="4">
    <source>
    </source>
</evidence>
<evidence type="ECO:0000303" key="5">
    <source>
    </source>
</evidence>
<evidence type="ECO:0000305" key="6"/>
<evidence type="ECO:0000305" key="7">
    <source>
    </source>
</evidence>
<organism>
    <name type="scientific">Gibberella fujikuroi (strain CBS 195.34 / IMI 58289 / NRRL A-6831)</name>
    <name type="common">Bakanae and foot rot disease fungus</name>
    <name type="synonym">Fusarium fujikuroi</name>
    <dbReference type="NCBI Taxonomy" id="1279085"/>
    <lineage>
        <taxon>Eukaryota</taxon>
        <taxon>Fungi</taxon>
        <taxon>Dikarya</taxon>
        <taxon>Ascomycota</taxon>
        <taxon>Pezizomycotina</taxon>
        <taxon>Sordariomycetes</taxon>
        <taxon>Hypocreomycetidae</taxon>
        <taxon>Hypocreales</taxon>
        <taxon>Nectriaceae</taxon>
        <taxon>Fusarium</taxon>
        <taxon>Fusarium fujikuroi species complex</taxon>
    </lineage>
</organism>
<sequence length="580" mass="65737">MGWEYAQVHLKYTIPFGVVLAAVYRPLMSRLDVFKLVFLITVAVVSTIPWDSYLIKNRIWTYPPGVVVGLTAWDIPAEELFFFVIQTFNTSLLYMILSKPTFHPIYLSKKTGWGKIAGQILFASAIIFGLVSVSSGGEGMYMGLILIWACPFLLFLWSISYQFIVNLPWTNTALPIALPTLYLWVVDTFALRRGTWSITSGTKYGVVLWDGLEIEEAVFFLLTNTLIVFGLIACDNNLAILDTFPEHFPRTKGVPSLLTIIRTLILPKEKYDEERIQGLVSAVALLRKKSRSFYLASGTFEGRLRIDLIRLYAFCRAADDLVDEAPSVDDSRASIEKLRKFLDLAYEENQEEPSQRLREYVTSSIPEMFHMALLQLPTYYLPKQPLDDLLKGFDTDLLFDRKSGAFPIETTEDLDIYGSRVAGTVAELCNHLILYHTPEAVPEDIQREVVASGQEMGIALQYVNIARDIKTDAEIDRVYLPLSWLKEAQLTPEDVIQQPHGPTIEALRHKLLDRAFEKYNMAKGAIDKLPSEGKGPIRVAVESYMEIGRVLREKGPTMKKGRATVPKMRRIRVAWSALNK</sequence>
<reference key="1">
    <citation type="journal article" date="2013" name="PLoS Pathog.">
        <title>Deciphering the cryptic genome: genome-wide analyses of the rice pathogen Fusarium fujikuroi reveal complex regulation of secondary metabolism and novel metabolites.</title>
        <authorList>
            <person name="Wiemann P."/>
            <person name="Sieber C.M.K."/>
            <person name="von Bargen K.W."/>
            <person name="Studt L."/>
            <person name="Niehaus E.-M."/>
            <person name="Espino J.J."/>
            <person name="Huss K."/>
            <person name="Michielse C.B."/>
            <person name="Albermann S."/>
            <person name="Wagner D."/>
            <person name="Bergner S.V."/>
            <person name="Connolly L.R."/>
            <person name="Fischer A."/>
            <person name="Reuter G."/>
            <person name="Kleigrewe K."/>
            <person name="Bald T."/>
            <person name="Wingfield B.D."/>
            <person name="Ophir R."/>
            <person name="Freeman S."/>
            <person name="Hippler M."/>
            <person name="Smith K.M."/>
            <person name="Brown D.W."/>
            <person name="Proctor R.H."/>
            <person name="Muensterkoetter M."/>
            <person name="Freitag M."/>
            <person name="Humpf H.-U."/>
            <person name="Gueldener U."/>
            <person name="Tudzynski B."/>
        </authorList>
    </citation>
    <scope>NUCLEOTIDE SEQUENCE [LARGE SCALE GENOMIC DNA]</scope>
    <source>
        <strain>CBS 195.34 / IMI 58289 / NRRL A-6831</strain>
    </source>
</reference>
<reference key="2">
    <citation type="journal article" date="2002" name="Mol. Genet. Genomics">
        <title>A carotenoid biosynthesis gene cluster in Fusarium fujikuroi: the genes carB and carRA.</title>
        <authorList>
            <person name="Linnemannstons P."/>
            <person name="Prado M.M."/>
            <person name="Fernandez-Martin R."/>
            <person name="Tudzynski B."/>
            <person name="Avalos J."/>
        </authorList>
    </citation>
    <scope>FUNCTION</scope>
    <scope>CATALYTIC ACTIVITY</scope>
    <scope>INDUCTION</scope>
</reference>
<reference key="3">
    <citation type="journal article" date="2004" name="Curr. Genet.">
        <title>A gene of the opsin family in the carotenoid gene cluster of Fusarium fujikuroi.</title>
        <authorList>
            <person name="Prado M.M."/>
            <person name="Prado-Cabrero A."/>
            <person name="Fernandez-Martin R."/>
            <person name="Avalos J."/>
        </authorList>
    </citation>
    <scope>INDUCTION</scope>
</reference>
<keyword id="KW-0125">Carotenoid biosynthesis</keyword>
<keyword id="KW-0325">Glycoprotein</keyword>
<keyword id="KW-0413">Isomerase</keyword>
<keyword id="KW-0472">Membrane</keyword>
<keyword id="KW-0511">Multifunctional enzyme</keyword>
<keyword id="KW-1185">Reference proteome</keyword>
<keyword id="KW-0808">Transferase</keyword>
<keyword id="KW-0812">Transmembrane</keyword>
<keyword id="KW-1133">Transmembrane helix</keyword>
<comment type="function">
    <text evidence="3 7">Bifunctional enzyme; part of the car gene cluster that mediates the biosynthesis of neurosporaxanthin, a carboxylic apocarotenoid acting as an essential protective pigments and leading to orange pigmentation (PubMed:12172798). CarAR catalyzes the first step of the pathway by converting geranylgeranyl diphosphate to phytoene, as well as the later cyclization step that transforms the carB product lycopene into gamma-carotene (PubMed:12172798). CarAR also converts part of gamma-carotene into beta-carotene (PubMed:12172798). Neurosporaxanthin is synthesized from geranyl-geranyl pyrophosphate (GGPP) through several enzymatic activities. Phytoene synthase activity performed by the bifunctional enzyme carAR first produces phytoene from geranyl-geranyl pyrophosphate (GGPP). The phytoene dehydrogenase carB then introduces 4 desaturations to lead to lycopene which is substrate of the carotene cyclase activity of carAR that leads to the production of gamma-carotene. CarB then performs a 5th desaturation reaction to yield torulene. Torulene is the substrate of the dioxidase carT that breaks the molecule, removing five carbon atoms to yield beta-apo-4'-carotenal, whereas the aldehyde dehydrogenase carD mediates the last step by converting beta-apo-4'-carotenal into neurosporaxanthin (Probable).</text>
</comment>
<comment type="catalytic activity">
    <reaction evidence="3">
        <text>all-trans-lycopene = gamma-carotene</text>
        <dbReference type="Rhea" id="RHEA:32219"/>
        <dbReference type="ChEBI" id="CHEBI:15948"/>
        <dbReference type="ChEBI" id="CHEBI:27740"/>
        <dbReference type="EC" id="5.5.1.19"/>
    </reaction>
</comment>
<comment type="catalytic activity">
    <reaction evidence="3">
        <text>gamma-carotene = all-trans-beta-carotene</text>
        <dbReference type="Rhea" id="RHEA:32239"/>
        <dbReference type="ChEBI" id="CHEBI:17579"/>
        <dbReference type="ChEBI" id="CHEBI:27740"/>
        <dbReference type="EC" id="5.5.1.19"/>
    </reaction>
</comment>
<comment type="catalytic activity">
    <reaction evidence="3">
        <text>2 (2E,6E,10E)-geranylgeranyl diphosphate = 15-cis-phytoene + 2 diphosphate</text>
        <dbReference type="Rhea" id="RHEA:34475"/>
        <dbReference type="ChEBI" id="CHEBI:27787"/>
        <dbReference type="ChEBI" id="CHEBI:33019"/>
        <dbReference type="ChEBI" id="CHEBI:58756"/>
        <dbReference type="EC" id="2.5.1.32"/>
    </reaction>
</comment>
<comment type="pathway">
    <text evidence="3">Carotenoid biosynthesis; beta-carotene biosynthesis.</text>
</comment>
<comment type="pathway">
    <text evidence="3">Carotenoid biosynthesis; phytoene biosynthesis; all-trans-phytoene from geranylgeranyl diphosphate: step 1/1.</text>
</comment>
<comment type="subcellular location">
    <subcellularLocation>
        <location evidence="1">Membrane</location>
        <topology evidence="1">Multi-pass membrane protein</topology>
    </subcellularLocation>
</comment>
<comment type="induction">
    <text evidence="3 4">The expression is subject to photoinduction.</text>
</comment>
<comment type="similarity">
    <text evidence="6">In the N-terminal section; belongs to the lycopene beta-cyclase family.</text>
</comment>
<comment type="similarity">
    <text evidence="6">In the C-terminal section; belongs to the phytoene/squalene synthase family.</text>
</comment>
<proteinExistence type="evidence at protein level"/>
<name>LCPS_GIBF5</name>
<dbReference type="EC" id="5.5.1.19" evidence="3"/>
<dbReference type="EC" id="2.5.1.32" evidence="3"/>
<dbReference type="EMBL" id="HF679033">
    <property type="protein sequence ID" value="CCT76070.1"/>
    <property type="molecule type" value="Genomic_DNA"/>
</dbReference>
<dbReference type="SMR" id="S0EQ07"/>
<dbReference type="STRING" id="1279085.S0EQ07"/>
<dbReference type="EnsemblFungi" id="CCT76070">
    <property type="protein sequence ID" value="CCT76070"/>
    <property type="gene ID" value="FFUJ_11802"/>
</dbReference>
<dbReference type="VEuPathDB" id="FungiDB:FFUJ_11802"/>
<dbReference type="HOGENOM" id="CLU_012965_0_0_1"/>
<dbReference type="UniPathway" id="UPA00799">
    <property type="reaction ID" value="UER00773"/>
</dbReference>
<dbReference type="UniPathway" id="UPA00802"/>
<dbReference type="Proteomes" id="UP000016800">
    <property type="component" value="Chromosome 11"/>
</dbReference>
<dbReference type="GO" id="GO:0016020">
    <property type="term" value="C:membrane"/>
    <property type="evidence" value="ECO:0007669"/>
    <property type="project" value="UniProtKB-SubCell"/>
</dbReference>
<dbReference type="GO" id="GO:0004311">
    <property type="term" value="F:geranylgeranyl diphosphate synthase activity"/>
    <property type="evidence" value="ECO:0007669"/>
    <property type="project" value="InterPro"/>
</dbReference>
<dbReference type="GO" id="GO:0016872">
    <property type="term" value="F:intramolecular lyase activity"/>
    <property type="evidence" value="ECO:0007669"/>
    <property type="project" value="InterPro"/>
</dbReference>
<dbReference type="GO" id="GO:0045436">
    <property type="term" value="F:lycopene beta cyclase activity"/>
    <property type="evidence" value="ECO:0007669"/>
    <property type="project" value="UniProtKB-ARBA"/>
</dbReference>
<dbReference type="GO" id="GO:0051996">
    <property type="term" value="F:squalene synthase [NAD(P)H] activity"/>
    <property type="evidence" value="ECO:0007669"/>
    <property type="project" value="InterPro"/>
</dbReference>
<dbReference type="GO" id="GO:0016117">
    <property type="term" value="P:carotenoid biosynthetic process"/>
    <property type="evidence" value="ECO:0007669"/>
    <property type="project" value="UniProtKB-KW"/>
</dbReference>
<dbReference type="CDD" id="cd00683">
    <property type="entry name" value="Trans_IPPS_HH"/>
    <property type="match status" value="1"/>
</dbReference>
<dbReference type="FunFam" id="1.10.600.10:FF:000018">
    <property type="entry name" value="Probable geranylgeranyl-diphosphate geranylgeranyltransferase (AL-2)"/>
    <property type="match status" value="1"/>
</dbReference>
<dbReference type="Gene3D" id="1.10.600.10">
    <property type="entry name" value="Farnesyl Diphosphate Synthase"/>
    <property type="match status" value="1"/>
</dbReference>
<dbReference type="InterPro" id="IPR008949">
    <property type="entry name" value="Isoprenoid_synthase_dom_sf"/>
</dbReference>
<dbReference type="InterPro" id="IPR017825">
    <property type="entry name" value="Lycopene_cyclase_dom"/>
</dbReference>
<dbReference type="InterPro" id="IPR002060">
    <property type="entry name" value="Squ/phyt_synthse"/>
</dbReference>
<dbReference type="InterPro" id="IPR019845">
    <property type="entry name" value="Squalene/phytoene_synthase_CS"/>
</dbReference>
<dbReference type="InterPro" id="IPR044843">
    <property type="entry name" value="Trans_IPPS_bact-type"/>
</dbReference>
<dbReference type="InterPro" id="IPR033904">
    <property type="entry name" value="Trans_IPPS_HH"/>
</dbReference>
<dbReference type="NCBIfam" id="TIGR03462">
    <property type="entry name" value="CarR_dom_SF"/>
    <property type="match status" value="2"/>
</dbReference>
<dbReference type="PANTHER" id="PTHR31480">
    <property type="entry name" value="BIFUNCTIONAL LYCOPENE CYCLASE/PHYTOENE SYNTHASE"/>
    <property type="match status" value="1"/>
</dbReference>
<dbReference type="Pfam" id="PF00494">
    <property type="entry name" value="SQS_PSY"/>
    <property type="match status" value="1"/>
</dbReference>
<dbReference type="SFLD" id="SFLDG01212">
    <property type="entry name" value="Phytoene_synthase_like"/>
    <property type="match status" value="1"/>
</dbReference>
<dbReference type="SFLD" id="SFLDG01018">
    <property type="entry name" value="Squalene/Phytoene_Synthase_Lik"/>
    <property type="match status" value="1"/>
</dbReference>
<dbReference type="SUPFAM" id="SSF48576">
    <property type="entry name" value="Terpenoid synthases"/>
    <property type="match status" value="1"/>
</dbReference>
<dbReference type="PROSITE" id="PS01045">
    <property type="entry name" value="SQUALEN_PHYTOEN_SYN_2"/>
    <property type="match status" value="1"/>
</dbReference>
<protein>
    <recommendedName>
        <fullName evidence="5">Bifunctional lycopene cyclase/phytoene synthase</fullName>
    </recommendedName>
    <domain>
        <recommendedName>
            <fullName evidence="5">Lycopene beta-cyclase</fullName>
            <ecNumber evidence="3">5.5.1.19</ecNumber>
        </recommendedName>
        <alternativeName>
            <fullName evidence="5">Lycopene cyclase</fullName>
        </alternativeName>
    </domain>
    <domain>
        <recommendedName>
            <fullName evidence="5">Phytoene synthase</fullName>
            <ecNumber evidence="3">2.5.1.32</ecNumber>
        </recommendedName>
        <alternativeName>
            <fullName evidence="5">Carotenoid biosynthesis cluster protein AR</fullName>
        </alternativeName>
    </domain>
</protein>
<gene>
    <name evidence="5" type="primary">carRA</name>
    <name type="ORF">FFUJ_11802</name>
</gene>